<dbReference type="PIR" id="JQ0683">
    <property type="entry name" value="JQ0683"/>
</dbReference>
<dbReference type="GO" id="GO:0005886">
    <property type="term" value="C:plasma membrane"/>
    <property type="evidence" value="ECO:0007669"/>
    <property type="project" value="UniProtKB-SubCell"/>
</dbReference>
<dbReference type="Gene3D" id="2.40.160.20">
    <property type="match status" value="1"/>
</dbReference>
<dbReference type="InterPro" id="IPR011250">
    <property type="entry name" value="OMP/PagP_b-brl"/>
</dbReference>
<dbReference type="InterPro" id="IPR004933">
    <property type="entry name" value="TSA"/>
</dbReference>
<dbReference type="NCBIfam" id="NF033390">
    <property type="entry name" value="Orientia_TSA56"/>
    <property type="match status" value="1"/>
</dbReference>
<dbReference type="Pfam" id="PF03249">
    <property type="entry name" value="TSA"/>
    <property type="match status" value="1"/>
</dbReference>
<dbReference type="PRINTS" id="PR01707">
    <property type="entry name" value="56KDTSANTIGN"/>
</dbReference>
<dbReference type="SUPFAM" id="SSF56925">
    <property type="entry name" value="OMPA-like"/>
    <property type="match status" value="1"/>
</dbReference>
<keyword id="KW-1003">Cell membrane</keyword>
<keyword id="KW-0903">Direct protein sequencing</keyword>
<keyword id="KW-0472">Membrane</keyword>
<keyword id="KW-0732">Signal</keyword>
<keyword id="KW-0812">Transmembrane</keyword>
<keyword id="KW-1133">Transmembrane helix</keyword>
<keyword id="KW-0843">Virulence</keyword>
<evidence type="ECO:0000255" key="1"/>
<evidence type="ECO:0000256" key="2">
    <source>
        <dbReference type="SAM" id="MobiDB-lite"/>
    </source>
</evidence>
<evidence type="ECO:0000269" key="3">
    <source>
    </source>
</evidence>
<feature type="signal peptide" evidence="3">
    <location>
        <begin position="1"/>
        <end position="22"/>
    </location>
</feature>
<feature type="chain" id="PRO_0000022591" description="56 kDa type-specific antigen">
    <location>
        <begin position="23"/>
        <end position="524"/>
    </location>
</feature>
<feature type="transmembrane region" description="Helical" evidence="1">
    <location>
        <begin position="67"/>
        <end position="87"/>
    </location>
</feature>
<feature type="transmembrane region" description="Helical" evidence="1">
    <location>
        <begin position="472"/>
        <end position="492"/>
    </location>
</feature>
<feature type="region of interest" description="Disordered" evidence="2">
    <location>
        <begin position="112"/>
        <end position="132"/>
    </location>
</feature>
<feature type="region of interest" description="Disordered" evidence="2">
    <location>
        <begin position="387"/>
        <end position="422"/>
    </location>
</feature>
<feature type="compositionally biased region" description="Basic and acidic residues" evidence="2">
    <location>
        <begin position="395"/>
        <end position="405"/>
    </location>
</feature>
<feature type="compositionally biased region" description="Basic and acidic residues" evidence="2">
    <location>
        <begin position="413"/>
        <end position="422"/>
    </location>
</feature>
<comment type="function">
    <text>May be an adherent factor for rickettsial adsorption to the host-cell surface and a determinant of virulence of individual rickettsial strain. It is the major outer membrane protein.</text>
</comment>
<comment type="subcellular location">
    <subcellularLocation>
        <location>Cell membrane</location>
        <topology>Multi-pass membrane protein</topology>
    </subcellularLocation>
</comment>
<name>TSAG_ORITS</name>
<accession>P22940</accession>
<proteinExistence type="evidence at protein level"/>
<protein>
    <recommendedName>
        <fullName>56 kDa type-specific antigen</fullName>
        <shortName>TSA</shortName>
    </recommendedName>
    <alternativeName>
        <fullName>56 kDa scrub typhus antigen</fullName>
    </alternativeName>
    <alternativeName>
        <fullName>STA56</fullName>
    </alternativeName>
    <alternativeName>
        <fullName>TSG56</fullName>
    </alternativeName>
</protein>
<reference key="1">
    <citation type="journal article" date="1990" name="Gene">
        <title>Cloning and sequencing of the gene (tsg56) encoding a type-specific antigen from Rickettsia tsutsugamushi.</title>
        <authorList>
            <person name="Ohashi N."/>
            <person name="Nashimoto H."/>
            <person name="Ikeda H."/>
            <person name="Tamura A."/>
        </authorList>
    </citation>
    <scope>NUCLEOTIDE SEQUENCE [GENOMIC DNA]</scope>
    <source>
        <strain>Gilliam</strain>
    </source>
</reference>
<reference key="2">
    <citation type="journal article" date="1989" name="Infect. Immun.">
        <title>Purification and partial characterization of a type-specific antigen of Rickettsia tsutsugamushi.</title>
        <authorList>
            <person name="Ohashi N."/>
            <person name="Tamura A."/>
            <person name="Ohta M."/>
            <person name="Hayashi K."/>
        </authorList>
    </citation>
    <scope>PROTEIN SEQUENCE OF 23-57</scope>
    <source>
        <strain>Gilliam</strain>
    </source>
</reference>
<sequence>MKKIMLIASAMSALSLPFSASAIELGEEGGLECGPYGKVGIVGGMITGAESTRLDSTDSEGKKHLSLTTGLPFGGTLAAGMTIAPGFRAELGVMYLRNISAEVEVGKGKVDSKGEIKADSGGGTDTPIRKRFKLTPPQPTIMPISIADRDVGVDTDILAQAAAGQPQLTVEQRAADRIAWLKNYAGIDYMVPDPQNPNARVINPVLLNITQGPPNVQPRPRQNLDILDHGQWRHLVVGVTALSHANKPSVTPVKVLSDKITKIYSDIKPFADIAGIDVPDTGLPNSASVEQIQSKMQELNDVLEDLRDSFDGYMGNAFANQIQLNFVMPQQAQQQQGQGQQQQAQATAQEAVAAAAVRLLNGNDQIAQLYKDLVKLQRHAGVKKAMEKLAAQQEEDAKNQGEGDCKQQQGASEKSKEGKGKETEFDLSMIVGQVKLYADLFTTESFSIYAGVGAGLAHTYGKIDDKDIKGHTGMVASGALGVAINAAEGVYVDLEGSYMHSFSKIEEKYSINPLMASVGVRYNF</sequence>
<organism>
    <name type="scientific">Orientia tsutsugamushi</name>
    <name type="common">Rickettsia tsutsugamushi</name>
    <dbReference type="NCBI Taxonomy" id="784"/>
    <lineage>
        <taxon>Bacteria</taxon>
        <taxon>Pseudomonadati</taxon>
        <taxon>Pseudomonadota</taxon>
        <taxon>Alphaproteobacteria</taxon>
        <taxon>Rickettsiales</taxon>
        <taxon>Rickettsiaceae</taxon>
        <taxon>Rickettsieae</taxon>
        <taxon>Orientia</taxon>
    </lineage>
</organism>